<dbReference type="EC" id="2.8.1.10" evidence="1"/>
<dbReference type="EMBL" id="AM295250">
    <property type="protein sequence ID" value="CAL28984.1"/>
    <property type="molecule type" value="Genomic_DNA"/>
</dbReference>
<dbReference type="RefSeq" id="WP_015901320.1">
    <property type="nucleotide sequence ID" value="NC_012121.1"/>
</dbReference>
<dbReference type="SMR" id="B9DKG1"/>
<dbReference type="KEGG" id="sca:SCA_2079"/>
<dbReference type="eggNOG" id="COG2022">
    <property type="taxonomic scope" value="Bacteria"/>
</dbReference>
<dbReference type="HOGENOM" id="CLU_062233_1_0_9"/>
<dbReference type="OrthoDB" id="9805935at2"/>
<dbReference type="BioCyc" id="SCAR396513:SCA_RS10495-MONOMER"/>
<dbReference type="UniPathway" id="UPA00060"/>
<dbReference type="Proteomes" id="UP000000444">
    <property type="component" value="Chromosome"/>
</dbReference>
<dbReference type="GO" id="GO:0005737">
    <property type="term" value="C:cytoplasm"/>
    <property type="evidence" value="ECO:0007669"/>
    <property type="project" value="UniProtKB-SubCell"/>
</dbReference>
<dbReference type="GO" id="GO:1990107">
    <property type="term" value="F:thiazole synthase activity"/>
    <property type="evidence" value="ECO:0007669"/>
    <property type="project" value="UniProtKB-EC"/>
</dbReference>
<dbReference type="GO" id="GO:0009229">
    <property type="term" value="P:thiamine diphosphate biosynthetic process"/>
    <property type="evidence" value="ECO:0007669"/>
    <property type="project" value="UniProtKB-UniRule"/>
</dbReference>
<dbReference type="CDD" id="cd04728">
    <property type="entry name" value="ThiG"/>
    <property type="match status" value="1"/>
</dbReference>
<dbReference type="Gene3D" id="3.20.20.70">
    <property type="entry name" value="Aldolase class I"/>
    <property type="match status" value="1"/>
</dbReference>
<dbReference type="HAMAP" id="MF_00443">
    <property type="entry name" value="ThiG"/>
    <property type="match status" value="1"/>
</dbReference>
<dbReference type="InterPro" id="IPR013785">
    <property type="entry name" value="Aldolase_TIM"/>
</dbReference>
<dbReference type="InterPro" id="IPR033983">
    <property type="entry name" value="Thiazole_synthase_ThiG"/>
</dbReference>
<dbReference type="InterPro" id="IPR008867">
    <property type="entry name" value="ThiG"/>
</dbReference>
<dbReference type="PANTHER" id="PTHR34266">
    <property type="entry name" value="THIAZOLE SYNTHASE"/>
    <property type="match status" value="1"/>
</dbReference>
<dbReference type="PANTHER" id="PTHR34266:SF2">
    <property type="entry name" value="THIAZOLE SYNTHASE"/>
    <property type="match status" value="1"/>
</dbReference>
<dbReference type="Pfam" id="PF05690">
    <property type="entry name" value="ThiG"/>
    <property type="match status" value="1"/>
</dbReference>
<dbReference type="SUPFAM" id="SSF110399">
    <property type="entry name" value="ThiG-like"/>
    <property type="match status" value="1"/>
</dbReference>
<name>THIG_STACT</name>
<reference key="1">
    <citation type="journal article" date="2009" name="Appl. Environ. Microbiol.">
        <title>Genome analysis of the meat starter culture bacterium Staphylococcus carnosus TM300.</title>
        <authorList>
            <person name="Rosenstein R."/>
            <person name="Nerz C."/>
            <person name="Biswas L."/>
            <person name="Resch A."/>
            <person name="Raddatz G."/>
            <person name="Schuster S.C."/>
            <person name="Goetz F."/>
        </authorList>
    </citation>
    <scope>NUCLEOTIDE SEQUENCE [LARGE SCALE GENOMIC DNA]</scope>
    <source>
        <strain>TM300</strain>
    </source>
</reference>
<evidence type="ECO:0000255" key="1">
    <source>
        <dbReference type="HAMAP-Rule" id="MF_00443"/>
    </source>
</evidence>
<organism>
    <name type="scientific">Staphylococcus carnosus (strain TM300)</name>
    <dbReference type="NCBI Taxonomy" id="396513"/>
    <lineage>
        <taxon>Bacteria</taxon>
        <taxon>Bacillati</taxon>
        <taxon>Bacillota</taxon>
        <taxon>Bacilli</taxon>
        <taxon>Bacillales</taxon>
        <taxon>Staphylococcaceae</taxon>
        <taxon>Staphylococcus</taxon>
    </lineage>
</organism>
<protein>
    <recommendedName>
        <fullName evidence="1">Thiazole synthase</fullName>
        <ecNumber evidence="1">2.8.1.10</ecNumber>
    </recommendedName>
</protein>
<feature type="chain" id="PRO_1000196904" description="Thiazole synthase">
    <location>
        <begin position="1"/>
        <end position="255"/>
    </location>
</feature>
<feature type="active site" description="Schiff-base intermediate with DXP" evidence="1">
    <location>
        <position position="96"/>
    </location>
</feature>
<feature type="binding site" evidence="1">
    <location>
        <position position="157"/>
    </location>
    <ligand>
        <name>1-deoxy-D-xylulose 5-phosphate</name>
        <dbReference type="ChEBI" id="CHEBI:57792"/>
    </ligand>
</feature>
<feature type="binding site" evidence="1">
    <location>
        <begin position="183"/>
        <end position="184"/>
    </location>
    <ligand>
        <name>1-deoxy-D-xylulose 5-phosphate</name>
        <dbReference type="ChEBI" id="CHEBI:57792"/>
    </ligand>
</feature>
<feature type="binding site" evidence="1">
    <location>
        <begin position="205"/>
        <end position="206"/>
    </location>
    <ligand>
        <name>1-deoxy-D-xylulose 5-phosphate</name>
        <dbReference type="ChEBI" id="CHEBI:57792"/>
    </ligand>
</feature>
<keyword id="KW-0963">Cytoplasm</keyword>
<keyword id="KW-1185">Reference proteome</keyword>
<keyword id="KW-0704">Schiff base</keyword>
<keyword id="KW-0784">Thiamine biosynthesis</keyword>
<keyword id="KW-0808">Transferase</keyword>
<proteinExistence type="inferred from homology"/>
<accession>B9DKG1</accession>
<sequence length="255" mass="27287">MLKIGPYEMESRLLLGTGKFDNEEIQTKAIEASGTDVLTFAVRRMNLYDKNLPNPLANVNLKDFVTFPNTAGAKTVDEAIRIAEIAKHAGVCDMIKVEIIGDDETLLPDPIATYEACEILLERGYIVCPYIAEDVVLAKRLEELGVHAVMPLASPIGTGRGINNPLNLSYIVKNANVPIIVDAGIGSAKDAAEAMELGADAVLLNSAVSRAKDPVKMAEAMKLGIEAGRLSYEAGRIPVKYTAQASSPSEGLGFL</sequence>
<gene>
    <name evidence="1" type="primary">thiG</name>
    <name type="ordered locus">Sca_2079</name>
</gene>
<comment type="function">
    <text evidence="1">Catalyzes the rearrangement of 1-deoxy-D-xylulose 5-phosphate (DXP) to produce the thiazole phosphate moiety of thiamine. Sulfur is provided by the thiocarboxylate moiety of the carrier protein ThiS. In vitro, sulfur can be provided by H(2)S.</text>
</comment>
<comment type="catalytic activity">
    <reaction evidence="1">
        <text>[ThiS sulfur-carrier protein]-C-terminal-Gly-aminoethanethioate + 2-iminoacetate + 1-deoxy-D-xylulose 5-phosphate = [ThiS sulfur-carrier protein]-C-terminal Gly-Gly + 2-[(2R,5Z)-2-carboxy-4-methylthiazol-5(2H)-ylidene]ethyl phosphate + 2 H2O + H(+)</text>
        <dbReference type="Rhea" id="RHEA:26297"/>
        <dbReference type="Rhea" id="RHEA-COMP:12909"/>
        <dbReference type="Rhea" id="RHEA-COMP:19908"/>
        <dbReference type="ChEBI" id="CHEBI:15377"/>
        <dbReference type="ChEBI" id="CHEBI:15378"/>
        <dbReference type="ChEBI" id="CHEBI:57792"/>
        <dbReference type="ChEBI" id="CHEBI:62899"/>
        <dbReference type="ChEBI" id="CHEBI:77846"/>
        <dbReference type="ChEBI" id="CHEBI:90778"/>
        <dbReference type="ChEBI" id="CHEBI:232372"/>
        <dbReference type="EC" id="2.8.1.10"/>
    </reaction>
</comment>
<comment type="pathway">
    <text evidence="1">Cofactor biosynthesis; thiamine diphosphate biosynthesis.</text>
</comment>
<comment type="subunit">
    <text evidence="1">Homotetramer. Forms heterodimers with either ThiH or ThiS.</text>
</comment>
<comment type="subcellular location">
    <subcellularLocation>
        <location evidence="1">Cytoplasm</location>
    </subcellularLocation>
</comment>
<comment type="similarity">
    <text evidence="1">Belongs to the ThiG family.</text>
</comment>